<comment type="function">
    <text evidence="1">Required for morphogenesis under gluconeogenic growth conditions.</text>
</comment>
<comment type="subcellular location">
    <subcellularLocation>
        <location evidence="1">Cytoplasm</location>
    </subcellularLocation>
</comment>
<comment type="similarity">
    <text evidence="1">Belongs to the gluconeogenesis factor family.</text>
</comment>
<evidence type="ECO:0000255" key="1">
    <source>
        <dbReference type="HAMAP-Rule" id="MF_00973"/>
    </source>
</evidence>
<evidence type="ECO:0007829" key="2">
    <source>
        <dbReference type="PDB" id="2Q7X"/>
    </source>
</evidence>
<gene>
    <name type="ordered locus">SP_1565</name>
</gene>
<protein>
    <recommendedName>
        <fullName evidence="1">Putative gluconeogenesis factor</fullName>
    </recommendedName>
</protein>
<accession>Q97PN8</accession>
<keyword id="KW-0002">3D-structure</keyword>
<keyword id="KW-0963">Cytoplasm</keyword>
<keyword id="KW-1185">Reference proteome</keyword>
<name>GNGF_STRPN</name>
<dbReference type="EMBL" id="AE005672">
    <property type="protein sequence ID" value="AAK75652.1"/>
    <property type="molecule type" value="Genomic_DNA"/>
</dbReference>
<dbReference type="PIR" id="C95182">
    <property type="entry name" value="C95182"/>
</dbReference>
<dbReference type="RefSeq" id="WP_001231105.1">
    <property type="nucleotide sequence ID" value="NZ_CP155539.1"/>
</dbReference>
<dbReference type="PDB" id="2Q7X">
    <property type="method" value="X-ray"/>
    <property type="resolution" value="2.00 A"/>
    <property type="chains" value="A/B=1-325"/>
</dbReference>
<dbReference type="PDBsum" id="2Q7X"/>
<dbReference type="SMR" id="Q97PN8"/>
<dbReference type="PaxDb" id="170187-SP_1565"/>
<dbReference type="DNASU" id="931275"/>
<dbReference type="EnsemblBacteria" id="AAK75652">
    <property type="protein sequence ID" value="AAK75652"/>
    <property type="gene ID" value="SP_1565"/>
</dbReference>
<dbReference type="KEGG" id="spn:SP_1565"/>
<dbReference type="eggNOG" id="COG0391">
    <property type="taxonomic scope" value="Bacteria"/>
</dbReference>
<dbReference type="PhylomeDB" id="Q97PN8"/>
<dbReference type="BioCyc" id="SPNE170187:G1FZB-1584-MONOMER"/>
<dbReference type="EvolutionaryTrace" id="Q97PN8"/>
<dbReference type="Proteomes" id="UP000000585">
    <property type="component" value="Chromosome"/>
</dbReference>
<dbReference type="GO" id="GO:0005737">
    <property type="term" value="C:cytoplasm"/>
    <property type="evidence" value="ECO:0007669"/>
    <property type="project" value="UniProtKB-SubCell"/>
</dbReference>
<dbReference type="GO" id="GO:0043743">
    <property type="term" value="F:LPPG:FO 2-phospho-L-lactate transferase activity"/>
    <property type="evidence" value="ECO:0007669"/>
    <property type="project" value="InterPro"/>
</dbReference>
<dbReference type="GO" id="GO:0008360">
    <property type="term" value="P:regulation of cell shape"/>
    <property type="evidence" value="ECO:0007669"/>
    <property type="project" value="UniProtKB-UniRule"/>
</dbReference>
<dbReference type="CDD" id="cd07044">
    <property type="entry name" value="CofD_YvcK"/>
    <property type="match status" value="1"/>
</dbReference>
<dbReference type="Gene3D" id="3.40.50.10680">
    <property type="entry name" value="CofD-like domains"/>
    <property type="match status" value="1"/>
</dbReference>
<dbReference type="HAMAP" id="MF_00973">
    <property type="entry name" value="Gluconeogen_factor"/>
    <property type="match status" value="1"/>
</dbReference>
<dbReference type="InterPro" id="IPR002882">
    <property type="entry name" value="CofD"/>
</dbReference>
<dbReference type="InterPro" id="IPR038136">
    <property type="entry name" value="CofD-like_dom_sf"/>
</dbReference>
<dbReference type="InterPro" id="IPR010119">
    <property type="entry name" value="Gluconeogen_factor"/>
</dbReference>
<dbReference type="NCBIfam" id="TIGR01826">
    <property type="entry name" value="CofD_related"/>
    <property type="match status" value="1"/>
</dbReference>
<dbReference type="PANTHER" id="PTHR30135:SF3">
    <property type="entry name" value="GLUCONEOGENESIS FACTOR-RELATED"/>
    <property type="match status" value="1"/>
</dbReference>
<dbReference type="PANTHER" id="PTHR30135">
    <property type="entry name" value="UNCHARACTERIZED PROTEIN YVCK-RELATED"/>
    <property type="match status" value="1"/>
</dbReference>
<dbReference type="Pfam" id="PF01933">
    <property type="entry name" value="CofD"/>
    <property type="match status" value="1"/>
</dbReference>
<dbReference type="SUPFAM" id="SSF142338">
    <property type="entry name" value="CofD-like"/>
    <property type="match status" value="1"/>
</dbReference>
<reference key="1">
    <citation type="journal article" date="2001" name="Science">
        <title>Complete genome sequence of a virulent isolate of Streptococcus pneumoniae.</title>
        <authorList>
            <person name="Tettelin H."/>
            <person name="Nelson K.E."/>
            <person name="Paulsen I.T."/>
            <person name="Eisen J.A."/>
            <person name="Read T.D."/>
            <person name="Peterson S.N."/>
            <person name="Heidelberg J.F."/>
            <person name="DeBoy R.T."/>
            <person name="Haft D.H."/>
            <person name="Dodson R.J."/>
            <person name="Durkin A.S."/>
            <person name="Gwinn M.L."/>
            <person name="Kolonay J.F."/>
            <person name="Nelson W.C."/>
            <person name="Peterson J.D."/>
            <person name="Umayam L.A."/>
            <person name="White O."/>
            <person name="Salzberg S.L."/>
            <person name="Lewis M.R."/>
            <person name="Radune D."/>
            <person name="Holtzapple E.K."/>
            <person name="Khouri H.M."/>
            <person name="Wolf A.M."/>
            <person name="Utterback T.R."/>
            <person name="Hansen C.L."/>
            <person name="McDonald L.A."/>
            <person name="Feldblyum T.V."/>
            <person name="Angiuoli S.V."/>
            <person name="Dickinson T."/>
            <person name="Hickey E.K."/>
            <person name="Holt I.E."/>
            <person name="Loftus B.J."/>
            <person name="Yang F."/>
            <person name="Smith H.O."/>
            <person name="Venter J.C."/>
            <person name="Dougherty B.A."/>
            <person name="Morrison D.A."/>
            <person name="Hollingshead S.K."/>
            <person name="Fraser C.M."/>
        </authorList>
    </citation>
    <scope>NUCLEOTIDE SEQUENCE [LARGE SCALE GENOMIC DNA]</scope>
    <source>
        <strain>ATCC BAA-334 / TIGR4</strain>
    </source>
</reference>
<reference key="2">
    <citation type="submission" date="2007-06" db="PDB data bank">
        <title>Crystal structure of uncharacterized protein SP_1565 (NP_346012.1) from Streptococcus pneumoniae TIGR4 at 2.00 A resolution.</title>
        <authorList>
            <consortium name="Joint Center for Structural Genomics (JCSG)"/>
        </authorList>
    </citation>
    <scope>X-RAY CRYSTALLOGRAPHY (2.00 ANGSTROMS)</scope>
    <source>
        <strain>ATCC BAA-334 / TIGR4</strain>
    </source>
</reference>
<proteinExistence type="evidence at protein level"/>
<organism>
    <name type="scientific">Streptococcus pneumoniae serotype 4 (strain ATCC BAA-334 / TIGR4)</name>
    <dbReference type="NCBI Taxonomy" id="170187"/>
    <lineage>
        <taxon>Bacteria</taxon>
        <taxon>Bacillati</taxon>
        <taxon>Bacillota</taxon>
        <taxon>Bacilli</taxon>
        <taxon>Lactobacillales</taxon>
        <taxon>Streptococcaceae</taxon>
        <taxon>Streptococcus</taxon>
    </lineage>
</organism>
<sequence length="325" mass="36033">MRKPKITVIGGGTGSPVILKSLREKDVEIAAIVTVADDGGSSGELRKNMQQLTPPGDLRNVLVAMSDMPKFYEKVFQYRFSEDAGAFAGHPLGNLIIAGLSEMQGSTYNAMQLLSKFFHTTGKIYPSSDHPLTLHAVFQDGTEVAGESHIVDHRGIIDNVYVTNALNDDTPLASRRVVQTILESDMIVLGPGSLFTSILPNIVIKEIGRALLETKAEIAYVCNIMTQRGETEHFTDSDHVEVLHRHLGRPFIDTVLVNIEKVPQEYMNSNRFDEYLVQVEHDFVGLCKQVSRVISSNFLRLENGGAFHDGDLIVDELMRIIQVKK</sequence>
<feature type="chain" id="PRO_0000107813" description="Putative gluconeogenesis factor">
    <location>
        <begin position="1"/>
        <end position="325"/>
    </location>
</feature>
<feature type="strand" evidence="2">
    <location>
        <begin position="6"/>
        <end position="9"/>
    </location>
</feature>
<feature type="helix" evidence="2">
    <location>
        <begin position="15"/>
        <end position="24"/>
    </location>
</feature>
<feature type="strand" evidence="2">
    <location>
        <begin position="30"/>
        <end position="33"/>
    </location>
</feature>
<feature type="helix" evidence="2">
    <location>
        <begin position="39"/>
        <end position="42"/>
    </location>
</feature>
<feature type="turn" evidence="2">
    <location>
        <begin position="46"/>
        <end position="48"/>
    </location>
</feature>
<feature type="helix" evidence="2">
    <location>
        <begin position="56"/>
        <end position="64"/>
    </location>
</feature>
<feature type="helix" evidence="2">
    <location>
        <begin position="69"/>
        <end position="75"/>
    </location>
</feature>
<feature type="helix" evidence="2">
    <location>
        <begin position="94"/>
        <end position="104"/>
    </location>
</feature>
<feature type="helix" evidence="2">
    <location>
        <begin position="107"/>
        <end position="118"/>
    </location>
</feature>
<feature type="strand" evidence="2">
    <location>
        <begin position="122"/>
        <end position="130"/>
    </location>
</feature>
<feature type="strand" evidence="2">
    <location>
        <begin position="132"/>
        <end position="138"/>
    </location>
</feature>
<feature type="strand" evidence="2">
    <location>
        <begin position="143"/>
        <end position="146"/>
    </location>
</feature>
<feature type="helix" evidence="2">
    <location>
        <begin position="147"/>
        <end position="152"/>
    </location>
</feature>
<feature type="strand" evidence="2">
    <location>
        <begin position="157"/>
        <end position="166"/>
    </location>
</feature>
<feature type="helix" evidence="2">
    <location>
        <begin position="176"/>
        <end position="183"/>
    </location>
</feature>
<feature type="strand" evidence="2">
    <location>
        <begin position="185"/>
        <end position="189"/>
    </location>
</feature>
<feature type="helix" evidence="2">
    <location>
        <begin position="194"/>
        <end position="198"/>
    </location>
</feature>
<feature type="helix" evidence="2">
    <location>
        <begin position="199"/>
        <end position="202"/>
    </location>
</feature>
<feature type="helix" evidence="2">
    <location>
        <begin position="207"/>
        <end position="213"/>
    </location>
</feature>
<feature type="strand" evidence="2">
    <location>
        <begin position="215"/>
        <end position="221"/>
    </location>
</feature>
<feature type="helix" evidence="2">
    <location>
        <begin position="236"/>
        <end position="247"/>
    </location>
</feature>
<feature type="strand" evidence="2">
    <location>
        <begin position="253"/>
        <end position="258"/>
    </location>
</feature>
<feature type="helix" evidence="2">
    <location>
        <begin position="264"/>
        <end position="269"/>
    </location>
</feature>
<feature type="helix" evidence="2">
    <location>
        <begin position="283"/>
        <end position="289"/>
    </location>
</feature>
<feature type="strand" evidence="2">
    <location>
        <begin position="291"/>
        <end position="296"/>
    </location>
</feature>
<feature type="strand" evidence="2">
    <location>
        <begin position="299"/>
        <end position="302"/>
    </location>
</feature>
<feature type="strand" evidence="2">
    <location>
        <begin position="305"/>
        <end position="308"/>
    </location>
</feature>
<feature type="helix" evidence="2">
    <location>
        <begin position="310"/>
        <end position="320"/>
    </location>
</feature>